<comment type="function">
    <text evidence="1">Probable lipid hydrolase.</text>
</comment>
<comment type="subcellular location">
    <subcellularLocation>
        <location evidence="5">Membrane</location>
        <topology evidence="5">Single-pass membrane protein</topology>
    </subcellularLocation>
</comment>
<comment type="similarity">
    <text evidence="5">Belongs to the PLPL family.</text>
</comment>
<evidence type="ECO:0000250" key="1"/>
<evidence type="ECO:0000255" key="2"/>
<evidence type="ECO:0000255" key="3">
    <source>
        <dbReference type="PROSITE-ProRule" id="PRU01161"/>
    </source>
</evidence>
<evidence type="ECO:0000256" key="4">
    <source>
        <dbReference type="SAM" id="MobiDB-lite"/>
    </source>
</evidence>
<evidence type="ECO:0000305" key="5"/>
<sequence length="815" mass="92518">MMVGSSSEKKIPLYDEQNDYINEDHISEFAKALVWQDYDDVSTTAPTTPLNGPLDMGDLSLLGGELGNGSDDVVVGDDDDDDDDDDDDDDDDDDDKTKYSSPQLKAAQEINDEATEIGAVPATTKPDLISSKNDWFPINSENLNPNSKRTKFAKSSKSSKSKSTSPIRALQNEFRNSASFTLLRWPILTFVVIWVTILGFLYLAVRVYVALLEYFFTWTGERKRLRDKLRQSTTYKEWIENAKELDKYLGLDKWATNPKFSYYDSQTVQLTINKLKKARLNNSMPELLILLQGCLKRNFAGIENRQLYSHMYYGTKNLVQDYYKEVVICINKVIESNEINSETKYKFFKTVLQNFGKSALCLSGGACFAYTHFGIAKALLDQDLLPNIISGTSGGGLIAALLCTRTNEELKKLLVPQLARKITACEDPWYVWIPRLLKTGARFDSVAWARKSNFFTKGSTTFEEAMAMTGRKLNISTVPADPHSPVILCNDITSPHCIIWSTLLASSAVPGILNPVVLMMKNPVNGAVVPFSLGSKWRDGSLRTDIPIDALNTYYHVNFTIVSQVNPHISLFFFAPKGTVGRPVSMSKRKTAKEKFASFRGGFIATALEQLFRLEIKKWLQIVKSLDLLPHVLQQDWSNVWLQNFTGTITIWPRNRLIDFWYILSDPNEKQMEEIITKGERSMYPKILFIKNRLSIEKAIEKGRKTSTAELRETQMNVALASDDDEDYVPSDYSLAKFKDRIGVTSKDFDMLGSTLRDDDADADVDEDDNEDEDEEDEDENDYEEYDVEDLDDPYESDAFDPHIVLTKERRHTVY</sequence>
<protein>
    <recommendedName>
        <fullName>Patatin-like phospholipase domain-containing protein LELG_00944</fullName>
        <ecNumber>3.1.1.-</ecNumber>
    </recommendedName>
</protein>
<reference key="1">
    <citation type="journal article" date="2009" name="Nature">
        <title>Evolution of pathogenicity and sexual reproduction in eight Candida genomes.</title>
        <authorList>
            <person name="Butler G."/>
            <person name="Rasmussen M.D."/>
            <person name="Lin M.F."/>
            <person name="Santos M.A.S."/>
            <person name="Sakthikumar S."/>
            <person name="Munro C.A."/>
            <person name="Rheinbay E."/>
            <person name="Grabherr M."/>
            <person name="Forche A."/>
            <person name="Reedy J.L."/>
            <person name="Agrafioti I."/>
            <person name="Arnaud M.B."/>
            <person name="Bates S."/>
            <person name="Brown A.J.P."/>
            <person name="Brunke S."/>
            <person name="Costanzo M.C."/>
            <person name="Fitzpatrick D.A."/>
            <person name="de Groot P.W.J."/>
            <person name="Harris D."/>
            <person name="Hoyer L.L."/>
            <person name="Hube B."/>
            <person name="Klis F.M."/>
            <person name="Kodira C."/>
            <person name="Lennard N."/>
            <person name="Logue M.E."/>
            <person name="Martin R."/>
            <person name="Neiman A.M."/>
            <person name="Nikolaou E."/>
            <person name="Quail M.A."/>
            <person name="Quinn J."/>
            <person name="Santos M.C."/>
            <person name="Schmitzberger F.F."/>
            <person name="Sherlock G."/>
            <person name="Shah P."/>
            <person name="Silverstein K.A.T."/>
            <person name="Skrzypek M.S."/>
            <person name="Soll D."/>
            <person name="Staggs R."/>
            <person name="Stansfield I."/>
            <person name="Stumpf M.P.H."/>
            <person name="Sudbery P.E."/>
            <person name="Srikantha T."/>
            <person name="Zeng Q."/>
            <person name="Berman J."/>
            <person name="Berriman M."/>
            <person name="Heitman J."/>
            <person name="Gow N.A.R."/>
            <person name="Lorenz M.C."/>
            <person name="Birren B.W."/>
            <person name="Kellis M."/>
            <person name="Cuomo C.A."/>
        </authorList>
    </citation>
    <scope>NUCLEOTIDE SEQUENCE [LARGE SCALE GENOMIC DNA]</scope>
    <source>
        <strain>ATCC 11503 / BCRC 21390 / CBS 2605 / JCM 1781 / NBRC 1676 / NRRL YB-4239</strain>
    </source>
</reference>
<gene>
    <name type="ORF">LELG_00944</name>
</gene>
<proteinExistence type="inferred from homology"/>
<organism>
    <name type="scientific">Lodderomyces elongisporus (strain ATCC 11503 / CBS 2605 / JCM 1781 / NBRC 1676 / NRRL YB-4239)</name>
    <name type="common">Yeast</name>
    <name type="synonym">Saccharomyces elongisporus</name>
    <dbReference type="NCBI Taxonomy" id="379508"/>
    <lineage>
        <taxon>Eukaryota</taxon>
        <taxon>Fungi</taxon>
        <taxon>Dikarya</taxon>
        <taxon>Ascomycota</taxon>
        <taxon>Saccharomycotina</taxon>
        <taxon>Pichiomycetes</taxon>
        <taxon>Debaryomycetaceae</taxon>
        <taxon>Candida/Lodderomyces clade</taxon>
        <taxon>Lodderomyces</taxon>
    </lineage>
</organism>
<feature type="chain" id="PRO_0000295560" description="Patatin-like phospholipase domain-containing protein LELG_00944">
    <location>
        <begin position="1"/>
        <end position="815"/>
    </location>
</feature>
<feature type="transmembrane region" description="Helical" evidence="2">
    <location>
        <begin position="185"/>
        <end position="205"/>
    </location>
</feature>
<feature type="domain" description="PNPLA" evidence="3">
    <location>
        <begin position="360"/>
        <end position="552"/>
    </location>
</feature>
<feature type="region of interest" description="Disordered" evidence="4">
    <location>
        <begin position="41"/>
        <end position="105"/>
    </location>
</feature>
<feature type="region of interest" description="Disordered" evidence="4">
    <location>
        <begin position="140"/>
        <end position="166"/>
    </location>
</feature>
<feature type="region of interest" description="Disordered" evidence="4">
    <location>
        <begin position="753"/>
        <end position="815"/>
    </location>
</feature>
<feature type="short sequence motif" description="GXSXG" evidence="3">
    <location>
        <begin position="391"/>
        <end position="395"/>
    </location>
</feature>
<feature type="compositionally biased region" description="Polar residues" evidence="4">
    <location>
        <begin position="41"/>
        <end position="50"/>
    </location>
</feature>
<feature type="compositionally biased region" description="Low complexity" evidence="4">
    <location>
        <begin position="54"/>
        <end position="73"/>
    </location>
</feature>
<feature type="compositionally biased region" description="Acidic residues" evidence="4">
    <location>
        <begin position="74"/>
        <end position="94"/>
    </location>
</feature>
<feature type="compositionally biased region" description="Basic residues" evidence="4">
    <location>
        <begin position="148"/>
        <end position="160"/>
    </location>
</feature>
<feature type="compositionally biased region" description="Acidic residues" evidence="4">
    <location>
        <begin position="759"/>
        <end position="799"/>
    </location>
</feature>
<feature type="active site" description="Nucleophile" evidence="3">
    <location>
        <position position="393"/>
    </location>
</feature>
<feature type="active site" description="Proton acceptor" evidence="3">
    <location>
        <position position="539"/>
    </location>
</feature>
<name>PLPL_LODEL</name>
<accession>A5DUA8</accession>
<keyword id="KW-0378">Hydrolase</keyword>
<keyword id="KW-0442">Lipid degradation</keyword>
<keyword id="KW-0443">Lipid metabolism</keyword>
<keyword id="KW-0472">Membrane</keyword>
<keyword id="KW-1185">Reference proteome</keyword>
<keyword id="KW-0812">Transmembrane</keyword>
<keyword id="KW-1133">Transmembrane helix</keyword>
<dbReference type="EC" id="3.1.1.-"/>
<dbReference type="EMBL" id="CH981524">
    <property type="protein sequence ID" value="EDK42766.1"/>
    <property type="molecule type" value="Genomic_DNA"/>
</dbReference>
<dbReference type="RefSeq" id="XP_001528424.1">
    <property type="nucleotide sequence ID" value="XM_001528374.1"/>
</dbReference>
<dbReference type="GeneID" id="5235808"/>
<dbReference type="KEGG" id="lel:PVL30_000909"/>
<dbReference type="VEuPathDB" id="FungiDB:LELG_00944"/>
<dbReference type="eggNOG" id="KOG2214">
    <property type="taxonomic scope" value="Eukaryota"/>
</dbReference>
<dbReference type="HOGENOM" id="CLU_009031_2_2_1"/>
<dbReference type="InParanoid" id="A5DUA8"/>
<dbReference type="OMA" id="CSWFTRG"/>
<dbReference type="OrthoDB" id="15478at2759"/>
<dbReference type="Proteomes" id="UP000001996">
    <property type="component" value="Unassembled WGS sequence"/>
</dbReference>
<dbReference type="GO" id="GO:0016020">
    <property type="term" value="C:membrane"/>
    <property type="evidence" value="ECO:0007669"/>
    <property type="project" value="UniProtKB-SubCell"/>
</dbReference>
<dbReference type="GO" id="GO:0004806">
    <property type="term" value="F:triacylglycerol lipase activity"/>
    <property type="evidence" value="ECO:0007669"/>
    <property type="project" value="InterPro"/>
</dbReference>
<dbReference type="GO" id="GO:0016042">
    <property type="term" value="P:lipid catabolic process"/>
    <property type="evidence" value="ECO:0007669"/>
    <property type="project" value="UniProtKB-KW"/>
</dbReference>
<dbReference type="GO" id="GO:0006641">
    <property type="term" value="P:triglyceride metabolic process"/>
    <property type="evidence" value="ECO:0007669"/>
    <property type="project" value="UniProtKB-ARBA"/>
</dbReference>
<dbReference type="CDD" id="cd07232">
    <property type="entry name" value="Pat_PLPL"/>
    <property type="match status" value="1"/>
</dbReference>
<dbReference type="Gene3D" id="3.40.1090.10">
    <property type="entry name" value="Cytosolic phospholipase A2 catalytic domain"/>
    <property type="match status" value="2"/>
</dbReference>
<dbReference type="InterPro" id="IPR016035">
    <property type="entry name" value="Acyl_Trfase/lysoPLipase"/>
</dbReference>
<dbReference type="InterPro" id="IPR050301">
    <property type="entry name" value="NTE"/>
</dbReference>
<dbReference type="InterPro" id="IPR002641">
    <property type="entry name" value="PNPLA_dom"/>
</dbReference>
<dbReference type="InterPro" id="IPR021771">
    <property type="entry name" value="Triacylglycerol_lipase_N"/>
</dbReference>
<dbReference type="PANTHER" id="PTHR14226">
    <property type="entry name" value="NEUROPATHY TARGET ESTERASE/SWISS CHEESE D.MELANOGASTER"/>
    <property type="match status" value="1"/>
</dbReference>
<dbReference type="PANTHER" id="PTHR14226:SF66">
    <property type="entry name" value="TRIACYLGLYCEROL LIPASE PTL2"/>
    <property type="match status" value="1"/>
</dbReference>
<dbReference type="Pfam" id="PF11815">
    <property type="entry name" value="DUF3336"/>
    <property type="match status" value="1"/>
</dbReference>
<dbReference type="Pfam" id="PF01734">
    <property type="entry name" value="Patatin"/>
    <property type="match status" value="1"/>
</dbReference>
<dbReference type="SUPFAM" id="SSF52151">
    <property type="entry name" value="FabD/lysophospholipase-like"/>
    <property type="match status" value="1"/>
</dbReference>
<dbReference type="PROSITE" id="PS51635">
    <property type="entry name" value="PNPLA"/>
    <property type="match status" value="1"/>
</dbReference>